<proteinExistence type="evidence at protein level"/>
<name>NBS1_ORYSJ</name>
<organism evidence="13">
    <name type="scientific">Oryza sativa subsp. japonica</name>
    <name type="common">Rice</name>
    <dbReference type="NCBI Taxonomy" id="39947"/>
    <lineage>
        <taxon>Eukaryota</taxon>
        <taxon>Viridiplantae</taxon>
        <taxon>Streptophyta</taxon>
        <taxon>Embryophyta</taxon>
        <taxon>Tracheophyta</taxon>
        <taxon>Spermatophyta</taxon>
        <taxon>Magnoliopsida</taxon>
        <taxon>Liliopsida</taxon>
        <taxon>Poales</taxon>
        <taxon>Poaceae</taxon>
        <taxon>BOP clade</taxon>
        <taxon>Oryzoideae</taxon>
        <taxon>Oryzeae</taxon>
        <taxon>Oryzinae</taxon>
        <taxon>Oryza</taxon>
        <taxon>Oryza sativa</taxon>
    </lineage>
</organism>
<comment type="function">
    <text evidence="1 2">Component of the MRN complex, which plays a central role in double-strand break (DSB) repair, DNA recombination, maintenance of telomere integrity and meiosis. The MRN complex is involved in the repair of DNA double-strand breaks (DSBs) via homologous recombination (HR), an error-free mechanism which primarily occurs during S and G2 phases (By similarity). The complex (1) mediates the end resection of damaged DNA, which generates proper single-stranded DNA, a key initial steps in HR, and is (2) required for the recruitment of other repair factors and efficient activation of ATM and ATR upon DNA damage. The MRN complex possesses single-strand endonuclease activity and double-strand-specific 3'-5' exonuclease activity, which are provided by MRE11, to initiate end resection, which is required for single-strand invasion and recombination. Within the MRN complex, NBS1 acts as a protein-protein adapter, which specifically recognizes and binds phosphorylated proteins, promoting their recruitment to DNA damage sites. Recruits MRE11 and RAD50 components of the MRN complex to DSBs in response to DNA damage (By similarity).</text>
</comment>
<comment type="subunit">
    <text evidence="8">Component of the MRN complex composed of two heterodimers RAD50 and MRE11 associated with a single NBS1.</text>
</comment>
<comment type="subcellular location">
    <subcellularLocation>
        <location evidence="1">Nucleus</location>
    </subcellularLocation>
    <subcellularLocation>
        <location evidence="1">Chromosome</location>
    </subcellularLocation>
    <text evidence="1">Localizes to DNA double-strand breaks (DSBs).</text>
</comment>
<comment type="tissue specificity">
    <text evidence="5">Mostly expressed in the shoot apex and young flower, but also in young leaves, root tips and stamen, tissues where frequent cell division or meiosis may occur.</text>
</comment>
<comment type="domain">
    <text evidence="1">The FHA and BRCT domains are likely to have a crucial role for both binding to histone H2AFX and for relocalization of MRE11/RAD50 complex to the vicinity of DNA damage.</text>
</comment>
<comment type="similarity">
    <text evidence="7">Belongs to the Nibrin family.</text>
</comment>
<feature type="chain" id="PRO_0000430945" description="Nibrin homolog">
    <location>
        <begin position="1"/>
        <end position="560"/>
    </location>
</feature>
<feature type="domain" description="FHA" evidence="4">
    <location>
        <begin position="25"/>
        <end position="87"/>
    </location>
</feature>
<feature type="domain" description="BRCT" evidence="3">
    <location>
        <begin position="115"/>
        <end position="190"/>
    </location>
</feature>
<feature type="sequence conflict" description="In Ref. 5; AK069561." ref="5">
    <original>K</original>
    <variation>E</variation>
    <location>
        <position position="463"/>
    </location>
</feature>
<dbReference type="EMBL" id="AC087182">
    <property type="protein sequence ID" value="AAL59021.1"/>
    <property type="molecule type" value="Genomic_DNA"/>
</dbReference>
<dbReference type="EMBL" id="DP000086">
    <property type="protein sequence ID" value="AAP54361.1"/>
    <property type="molecule type" value="Genomic_DNA"/>
</dbReference>
<dbReference type="EMBL" id="AP008216">
    <property type="protein sequence ID" value="BAF26819.1"/>
    <property type="molecule type" value="Genomic_DNA"/>
</dbReference>
<dbReference type="EMBL" id="AP014966">
    <property type="protein sequence ID" value="BAT11396.1"/>
    <property type="molecule type" value="Genomic_DNA"/>
</dbReference>
<dbReference type="EMBL" id="CM000147">
    <property type="protein sequence ID" value="EEE51174.1"/>
    <property type="molecule type" value="Genomic_DNA"/>
</dbReference>
<dbReference type="EMBL" id="AK069561">
    <property type="status" value="NOT_ANNOTATED_CDS"/>
    <property type="molecule type" value="mRNA"/>
</dbReference>
<dbReference type="RefSeq" id="XP_015614711.1">
    <property type="nucleotide sequence ID" value="XM_015759225.1"/>
</dbReference>
<dbReference type="SMR" id="Q7XD82"/>
<dbReference type="FunCoup" id="Q7XD82">
    <property type="interactions" value="355"/>
</dbReference>
<dbReference type="STRING" id="39947.Q7XD82"/>
<dbReference type="iPTMnet" id="Q7XD82"/>
<dbReference type="PaxDb" id="39947-Q7XD82"/>
<dbReference type="EnsemblPlants" id="Os10t0487300-01">
    <property type="protein sequence ID" value="Os10t0487300-01"/>
    <property type="gene ID" value="Os10g0487300"/>
</dbReference>
<dbReference type="Gramene" id="Os10t0487300-01">
    <property type="protein sequence ID" value="Os10t0487300-01"/>
    <property type="gene ID" value="Os10g0487300"/>
</dbReference>
<dbReference type="KEGG" id="dosa:Os10g0487300"/>
<dbReference type="eggNOG" id="ENOG502QQ7Y">
    <property type="taxonomic scope" value="Eukaryota"/>
</dbReference>
<dbReference type="HOGENOM" id="CLU_036857_0_0_1"/>
<dbReference type="InParanoid" id="Q7XD82"/>
<dbReference type="OMA" id="RDETCHV"/>
<dbReference type="OrthoDB" id="552194at2759"/>
<dbReference type="Proteomes" id="UP000000763">
    <property type="component" value="Chromosome 10"/>
</dbReference>
<dbReference type="Proteomes" id="UP000007752">
    <property type="component" value="Chromosome 10"/>
</dbReference>
<dbReference type="Proteomes" id="UP000059680">
    <property type="component" value="Chromosome 10"/>
</dbReference>
<dbReference type="GO" id="GO:0005694">
    <property type="term" value="C:chromosome"/>
    <property type="evidence" value="ECO:0007669"/>
    <property type="project" value="UniProtKB-SubCell"/>
</dbReference>
<dbReference type="GO" id="GO:0030870">
    <property type="term" value="C:Mre11 complex"/>
    <property type="evidence" value="ECO:0000318"/>
    <property type="project" value="GO_Central"/>
</dbReference>
<dbReference type="GO" id="GO:0003684">
    <property type="term" value="F:damaged DNA binding"/>
    <property type="evidence" value="ECO:0000318"/>
    <property type="project" value="GO_Central"/>
</dbReference>
<dbReference type="GO" id="GO:0071479">
    <property type="term" value="P:cellular response to ionizing radiation"/>
    <property type="evidence" value="ECO:0000250"/>
    <property type="project" value="UniProtKB"/>
</dbReference>
<dbReference type="GO" id="GO:0006974">
    <property type="term" value="P:DNA damage response"/>
    <property type="evidence" value="ECO:0000250"/>
    <property type="project" value="UniProtKB"/>
</dbReference>
<dbReference type="GO" id="GO:0000724">
    <property type="term" value="P:double-strand break repair via homologous recombination"/>
    <property type="evidence" value="ECO:0000250"/>
    <property type="project" value="UniProtKB"/>
</dbReference>
<dbReference type="GO" id="GO:0007095">
    <property type="term" value="P:mitotic G2 DNA damage checkpoint signaling"/>
    <property type="evidence" value="ECO:0000318"/>
    <property type="project" value="GO_Central"/>
</dbReference>
<dbReference type="GO" id="GO:0006312">
    <property type="term" value="P:mitotic recombination"/>
    <property type="evidence" value="ECO:0000250"/>
    <property type="project" value="UniProtKB"/>
</dbReference>
<dbReference type="GO" id="GO:0007131">
    <property type="term" value="P:reciprocal meiotic recombination"/>
    <property type="evidence" value="ECO:0000250"/>
    <property type="project" value="UniProtKB"/>
</dbReference>
<dbReference type="CDD" id="cd22667">
    <property type="entry name" value="FHA_NBN"/>
    <property type="match status" value="1"/>
</dbReference>
<dbReference type="FunFam" id="2.60.200.20:FF:000051">
    <property type="entry name" value="Nijmegen breakage syndrome 1 protein"/>
    <property type="match status" value="1"/>
</dbReference>
<dbReference type="FunFam" id="3.40.50.10190:FF:000075">
    <property type="entry name" value="Nijmegen breakage syndrome 1 protein"/>
    <property type="match status" value="1"/>
</dbReference>
<dbReference type="Gene3D" id="2.60.200.20">
    <property type="match status" value="1"/>
</dbReference>
<dbReference type="Gene3D" id="3.40.50.10190">
    <property type="entry name" value="BRCT domain"/>
    <property type="match status" value="1"/>
</dbReference>
<dbReference type="InterPro" id="IPR036420">
    <property type="entry name" value="BRCT_dom_sf"/>
</dbReference>
<dbReference type="InterPro" id="IPR000253">
    <property type="entry name" value="FHA_dom"/>
</dbReference>
<dbReference type="InterPro" id="IPR040227">
    <property type="entry name" value="Nibrin-rel"/>
</dbReference>
<dbReference type="InterPro" id="IPR013908">
    <property type="entry name" value="Nibrin_C"/>
</dbReference>
<dbReference type="InterPro" id="IPR008984">
    <property type="entry name" value="SMAD_FHA_dom_sf"/>
</dbReference>
<dbReference type="PANTHER" id="PTHR12162:SF0">
    <property type="entry name" value="NIBRIN"/>
    <property type="match status" value="1"/>
</dbReference>
<dbReference type="PANTHER" id="PTHR12162">
    <property type="entry name" value="NIBRIN-RELATED"/>
    <property type="match status" value="1"/>
</dbReference>
<dbReference type="Pfam" id="PF00498">
    <property type="entry name" value="FHA"/>
    <property type="match status" value="1"/>
</dbReference>
<dbReference type="SMART" id="SM01348">
    <property type="entry name" value="Nbs1_C"/>
    <property type="match status" value="1"/>
</dbReference>
<dbReference type="SUPFAM" id="SSF52113">
    <property type="entry name" value="BRCT domain"/>
    <property type="match status" value="1"/>
</dbReference>
<dbReference type="SUPFAM" id="SSF49879">
    <property type="entry name" value="SMAD/FHA domain"/>
    <property type="match status" value="1"/>
</dbReference>
<dbReference type="PROSITE" id="PS50006">
    <property type="entry name" value="FHA_DOMAIN"/>
    <property type="match status" value="1"/>
</dbReference>
<protein>
    <recommendedName>
        <fullName evidence="7">Nibrin homolog</fullName>
    </recommendedName>
    <alternativeName>
        <fullName evidence="6">Nijmegen breakage syndrome 1 protein</fullName>
        <shortName evidence="6">OsNbs1</shortName>
    </alternativeName>
</protein>
<reference key="1">
    <citation type="journal article" date="2003" name="Science">
        <title>In-depth view of structure, activity, and evolution of rice chromosome 10.</title>
        <authorList>
            <person name="Yu Y."/>
            <person name="Rambo T."/>
            <person name="Currie J."/>
            <person name="Saski C."/>
            <person name="Kim H.-R."/>
            <person name="Collura K."/>
            <person name="Thompson S."/>
            <person name="Simmons J."/>
            <person name="Yang T.-J."/>
            <person name="Nah G."/>
            <person name="Patel A.J."/>
            <person name="Thurmond S."/>
            <person name="Henry D."/>
            <person name="Oates R."/>
            <person name="Palmer M."/>
            <person name="Pries G."/>
            <person name="Gibson J."/>
            <person name="Anderson H."/>
            <person name="Paradkar M."/>
            <person name="Crane L."/>
            <person name="Dale J."/>
            <person name="Carver M.B."/>
            <person name="Wood T."/>
            <person name="Frisch D."/>
            <person name="Engler F."/>
            <person name="Soderlund C."/>
            <person name="Palmer L.E."/>
            <person name="Teytelman L."/>
            <person name="Nascimento L."/>
            <person name="De la Bastide M."/>
            <person name="Spiegel L."/>
            <person name="Ware D."/>
            <person name="O'Shaughnessy A."/>
            <person name="Dike S."/>
            <person name="Dedhia N."/>
            <person name="Preston R."/>
            <person name="Huang E."/>
            <person name="Ferraro K."/>
            <person name="Kuit K."/>
            <person name="Miller B."/>
            <person name="Zutavern T."/>
            <person name="Katzenberger F."/>
            <person name="Muller S."/>
            <person name="Balija V."/>
            <person name="Martienssen R.A."/>
            <person name="Stein L."/>
            <person name="Minx P."/>
            <person name="Johnson D."/>
            <person name="Cordum H."/>
            <person name="Mardis E."/>
            <person name="Cheng Z."/>
            <person name="Jiang J."/>
            <person name="Wilson R."/>
            <person name="McCombie W.R."/>
            <person name="Wing R.A."/>
            <person name="Yuan Q."/>
            <person name="Ouyang S."/>
            <person name="Liu J."/>
            <person name="Jones K.M."/>
            <person name="Gansberger K."/>
            <person name="Moffat K."/>
            <person name="Hill J."/>
            <person name="Tsitrin T."/>
            <person name="Overton L."/>
            <person name="Bera J."/>
            <person name="Kim M."/>
            <person name="Jin S."/>
            <person name="Tallon L."/>
            <person name="Ciecko A."/>
            <person name="Pai G."/>
            <person name="Van Aken S."/>
            <person name="Utterback T."/>
            <person name="Reidmuller S."/>
            <person name="Bormann J."/>
            <person name="Feldblyum T."/>
            <person name="Hsiao J."/>
            <person name="Zismann V."/>
            <person name="Blunt S."/>
            <person name="de Vazeille A.R."/>
            <person name="Shaffer T."/>
            <person name="Koo H."/>
            <person name="Suh B."/>
            <person name="Yang Q."/>
            <person name="Haas B."/>
            <person name="Peterson J."/>
            <person name="Pertea M."/>
            <person name="Volfovsky N."/>
            <person name="Wortman J."/>
            <person name="White O."/>
            <person name="Salzberg S.L."/>
            <person name="Fraser C.M."/>
            <person name="Buell C.R."/>
            <person name="Messing J."/>
            <person name="Song R."/>
            <person name="Fuks G."/>
            <person name="Llaca V."/>
            <person name="Kovchak S."/>
            <person name="Young S."/>
            <person name="Bowers J.E."/>
            <person name="Paterson A.H."/>
            <person name="Johns M.A."/>
            <person name="Mao L."/>
            <person name="Pan H."/>
            <person name="Dean R.A."/>
        </authorList>
    </citation>
    <scope>NUCLEOTIDE SEQUENCE [LARGE SCALE GENOMIC DNA]</scope>
    <source>
        <strain>cv. Nipponbare</strain>
    </source>
</reference>
<reference key="2">
    <citation type="journal article" date="2005" name="Nature">
        <title>The map-based sequence of the rice genome.</title>
        <authorList>
            <consortium name="International rice genome sequencing project (IRGSP)"/>
        </authorList>
    </citation>
    <scope>NUCLEOTIDE SEQUENCE [LARGE SCALE GENOMIC DNA]</scope>
    <source>
        <strain>cv. Nipponbare</strain>
    </source>
</reference>
<reference key="3">
    <citation type="journal article" date="2008" name="Nucleic Acids Res.">
        <title>The rice annotation project database (RAP-DB): 2008 update.</title>
        <authorList>
            <consortium name="The rice annotation project (RAP)"/>
        </authorList>
    </citation>
    <scope>GENOME REANNOTATION</scope>
    <source>
        <strain>cv. Nipponbare</strain>
    </source>
</reference>
<reference key="4">
    <citation type="journal article" date="2013" name="Rice">
        <title>Improvement of the Oryza sativa Nipponbare reference genome using next generation sequence and optical map data.</title>
        <authorList>
            <person name="Kawahara Y."/>
            <person name="de la Bastide M."/>
            <person name="Hamilton J.P."/>
            <person name="Kanamori H."/>
            <person name="McCombie W.R."/>
            <person name="Ouyang S."/>
            <person name="Schwartz D.C."/>
            <person name="Tanaka T."/>
            <person name="Wu J."/>
            <person name="Zhou S."/>
            <person name="Childs K.L."/>
            <person name="Davidson R.M."/>
            <person name="Lin H."/>
            <person name="Quesada-Ocampo L."/>
            <person name="Vaillancourt B."/>
            <person name="Sakai H."/>
            <person name="Lee S.S."/>
            <person name="Kim J."/>
            <person name="Numa H."/>
            <person name="Itoh T."/>
            <person name="Buell C.R."/>
            <person name="Matsumoto T."/>
        </authorList>
    </citation>
    <scope>GENOME REANNOTATION</scope>
    <source>
        <strain>cv. Nipponbare</strain>
    </source>
</reference>
<reference key="5">
    <citation type="journal article" date="2005" name="PLoS Biol.">
        <title>The genomes of Oryza sativa: a history of duplications.</title>
        <authorList>
            <person name="Yu J."/>
            <person name="Wang J."/>
            <person name="Lin W."/>
            <person name="Li S."/>
            <person name="Li H."/>
            <person name="Zhou J."/>
            <person name="Ni P."/>
            <person name="Dong W."/>
            <person name="Hu S."/>
            <person name="Zeng C."/>
            <person name="Zhang J."/>
            <person name="Zhang Y."/>
            <person name="Li R."/>
            <person name="Xu Z."/>
            <person name="Li S."/>
            <person name="Li X."/>
            <person name="Zheng H."/>
            <person name="Cong L."/>
            <person name="Lin L."/>
            <person name="Yin J."/>
            <person name="Geng J."/>
            <person name="Li G."/>
            <person name="Shi J."/>
            <person name="Liu J."/>
            <person name="Lv H."/>
            <person name="Li J."/>
            <person name="Wang J."/>
            <person name="Deng Y."/>
            <person name="Ran L."/>
            <person name="Shi X."/>
            <person name="Wang X."/>
            <person name="Wu Q."/>
            <person name="Li C."/>
            <person name="Ren X."/>
            <person name="Wang J."/>
            <person name="Wang X."/>
            <person name="Li D."/>
            <person name="Liu D."/>
            <person name="Zhang X."/>
            <person name="Ji Z."/>
            <person name="Zhao W."/>
            <person name="Sun Y."/>
            <person name="Zhang Z."/>
            <person name="Bao J."/>
            <person name="Han Y."/>
            <person name="Dong L."/>
            <person name="Ji J."/>
            <person name="Chen P."/>
            <person name="Wu S."/>
            <person name="Liu J."/>
            <person name="Xiao Y."/>
            <person name="Bu D."/>
            <person name="Tan J."/>
            <person name="Yang L."/>
            <person name="Ye C."/>
            <person name="Zhang J."/>
            <person name="Xu J."/>
            <person name="Zhou Y."/>
            <person name="Yu Y."/>
            <person name="Zhang B."/>
            <person name="Zhuang S."/>
            <person name="Wei H."/>
            <person name="Liu B."/>
            <person name="Lei M."/>
            <person name="Yu H."/>
            <person name="Li Y."/>
            <person name="Xu H."/>
            <person name="Wei S."/>
            <person name="He X."/>
            <person name="Fang L."/>
            <person name="Zhang Z."/>
            <person name="Zhang Y."/>
            <person name="Huang X."/>
            <person name="Su Z."/>
            <person name="Tong W."/>
            <person name="Li J."/>
            <person name="Tong Z."/>
            <person name="Li S."/>
            <person name="Ye J."/>
            <person name="Wang L."/>
            <person name="Fang L."/>
            <person name="Lei T."/>
            <person name="Chen C.-S."/>
            <person name="Chen H.-C."/>
            <person name="Xu Z."/>
            <person name="Li H."/>
            <person name="Huang H."/>
            <person name="Zhang F."/>
            <person name="Xu H."/>
            <person name="Li N."/>
            <person name="Zhao C."/>
            <person name="Li S."/>
            <person name="Dong L."/>
            <person name="Huang Y."/>
            <person name="Li L."/>
            <person name="Xi Y."/>
            <person name="Qi Q."/>
            <person name="Li W."/>
            <person name="Zhang B."/>
            <person name="Hu W."/>
            <person name="Zhang Y."/>
            <person name="Tian X."/>
            <person name="Jiao Y."/>
            <person name="Liang X."/>
            <person name="Jin J."/>
            <person name="Gao L."/>
            <person name="Zheng W."/>
            <person name="Hao B."/>
            <person name="Liu S.-M."/>
            <person name="Wang W."/>
            <person name="Yuan L."/>
            <person name="Cao M."/>
            <person name="McDermott J."/>
            <person name="Samudrala R."/>
            <person name="Wang J."/>
            <person name="Wong G.K.-S."/>
            <person name="Yang H."/>
        </authorList>
    </citation>
    <scope>NUCLEOTIDE SEQUENCE [LARGE SCALE GENOMIC DNA]</scope>
    <source>
        <strain>cv. Nipponbare</strain>
    </source>
</reference>
<reference key="6">
    <citation type="journal article" date="2003" name="Science">
        <title>Collection, mapping, and annotation of over 28,000 cDNA clones from japonica rice.</title>
        <authorList>
            <consortium name="The rice full-length cDNA consortium"/>
        </authorList>
    </citation>
    <scope>NUCLEOTIDE SEQUENCE [LARGE SCALE MRNA]</scope>
    <source>
        <strain>cv. Nipponbare</strain>
    </source>
</reference>
<reference key="7">
    <citation type="journal article" date="2007" name="Biochem. Biophys. Res. Commun.">
        <title>Characterization of the plant homolog of Nijmegen breakage syndrome 1: Involvement in DNA repair and recombination.</title>
        <authorList>
            <person name="Akutsu N."/>
            <person name="Iijima K."/>
            <person name="Hinata T."/>
            <person name="Tauchi H."/>
        </authorList>
    </citation>
    <scope>INTERACTION WITH MRE11</scope>
    <scope>TISSUE SPECIFICITY</scope>
</reference>
<keyword id="KW-0131">Cell cycle</keyword>
<keyword id="KW-0158">Chromosome</keyword>
<keyword id="KW-0227">DNA damage</keyword>
<keyword id="KW-0234">DNA repair</keyword>
<keyword id="KW-0539">Nucleus</keyword>
<keyword id="KW-1185">Reference proteome</keyword>
<sequence length="560" mass="61994">MVWALTPVDTVRGAQRCYIFAAGTYKVGRKDCDVIVQTDTSISRVHAEIVVEKMVAWDPQSGAPANPSYVRVVDRSKYGTFFNKVQGTQGSRLHKDEDAMLADGDTVTFGTGNATFRLSFVPIVVFFHGKKSGRISPCLQAVMTSIGAYATRKWSDECTHVLVDESCSLTPELLDAVLAKKQIVLGDWFKVMAEKNIHTEMPSSTQYIPKLTLDGMEIQVVEIKLIESCLAGYTFILGSSEKYKFGDKLHALLESTGAKYLHVDEFCANSQDSGAGENDKDILLVPAKSPLEFSKIRGLFPLSKITDVKLFAAILSGHLEATAIEPPAYIVASSNSTDETIVVDSDVEIDTATSDHTVAASKSEHHIEHISDDKKEVVAISEEDAVNLVEAKTSINLHSDQEKDEIVKPMEEDVKVIEKTATMRGFKVEGEDIPVMTKVPKDETLDSRDETCHVIYTQNLVVKSILQSARAESIETGGINFKRFRKRGAVSGNSFKDLIPYSREPYRESDYERGTVTDFMREEKKRRQMEAIAEDLFNNAKPKKKAAAGSSIHTMLTGRR</sequence>
<accession>Q7XD82</accession>
<accession>A0A0P0XVJ9</accession>
<accession>Q8W382</accession>
<evidence type="ECO:0000250" key="1">
    <source>
        <dbReference type="UniProtKB" id="O60934"/>
    </source>
</evidence>
<evidence type="ECO:0000250" key="2">
    <source>
        <dbReference type="UniProtKB" id="Q0H8D7"/>
    </source>
</evidence>
<evidence type="ECO:0000255" key="3">
    <source>
        <dbReference type="PROSITE-ProRule" id="PRU00033"/>
    </source>
</evidence>
<evidence type="ECO:0000255" key="4">
    <source>
        <dbReference type="PROSITE-ProRule" id="PRU00086"/>
    </source>
</evidence>
<evidence type="ECO:0000269" key="5">
    <source>
    </source>
</evidence>
<evidence type="ECO:0000303" key="6">
    <source>
    </source>
</evidence>
<evidence type="ECO:0000305" key="7"/>
<evidence type="ECO:0000305" key="8">
    <source>
    </source>
</evidence>
<evidence type="ECO:0000312" key="9">
    <source>
        <dbReference type="EMBL" id="AAL59021.1"/>
    </source>
</evidence>
<evidence type="ECO:0000312" key="10">
    <source>
        <dbReference type="EMBL" id="AAP54361.1"/>
    </source>
</evidence>
<evidence type="ECO:0000312" key="11">
    <source>
        <dbReference type="EMBL" id="BAF26819.1"/>
    </source>
</evidence>
<evidence type="ECO:0000312" key="12">
    <source>
        <dbReference type="EMBL" id="EEE51174.1"/>
    </source>
</evidence>
<evidence type="ECO:0000312" key="13">
    <source>
        <dbReference type="Proteomes" id="UP000059680"/>
    </source>
</evidence>
<gene>
    <name evidence="6" type="primary">NBS1</name>
    <name evidence="10" type="ordered locus">LOC_Os10g34580</name>
    <name evidence="11" type="ordered locus">Os10g0487300</name>
    <name evidence="12" type="ORF">OsJ_31956</name>
    <name evidence="9" type="ORF">OSJNBa0029C15.11</name>
</gene>